<sequence length="112" mass="12383">MKLLGIFLVASFAFVLSFGEEMIEGENPLEDQRAELTSCFPVGHECDGDASNCNCCGDDVYCGCGWGRWNCKCKVADQSYAYGICKDKVNCPNRHLWPAKVCKKPCRRNCGG</sequence>
<evidence type="ECO:0000255" key="1"/>
<evidence type="ECO:0000269" key="2">
    <source>
    </source>
</evidence>
<evidence type="ECO:0000269" key="3">
    <source>
    </source>
</evidence>
<evidence type="ECO:0000269" key="4">
    <source>
    </source>
</evidence>
<evidence type="ECO:0000269" key="5">
    <source>
    </source>
</evidence>
<evidence type="ECO:0000269" key="6">
    <source>
    </source>
</evidence>
<evidence type="ECO:0000269" key="7">
    <source>
    </source>
</evidence>
<evidence type="ECO:0000305" key="8"/>
<feature type="signal peptide" evidence="1">
    <location>
        <begin position="1"/>
        <end position="19"/>
    </location>
</feature>
<feature type="propeptide" id="PRO_0000035492" evidence="2 3 5 6">
    <location>
        <begin position="20"/>
        <end position="33"/>
    </location>
</feature>
<feature type="chain" id="PRO_0000035493" description="Mu-ctenitoxin-Pn1a">
    <location>
        <begin position="34"/>
        <end position="111"/>
    </location>
</feature>
<feature type="modified residue" description="Glycine amide" evidence="3">
    <location>
        <position position="111"/>
    </location>
</feature>
<feature type="disulfide bond" evidence="8">
    <location>
        <begin position="39"/>
        <end position="56"/>
    </location>
</feature>
<feature type="disulfide bond" evidence="8">
    <location>
        <begin position="46"/>
        <end position="62"/>
    </location>
</feature>
<feature type="disulfide bond" evidence="1">
    <location>
        <begin position="53"/>
        <end position="85"/>
    </location>
</feature>
<feature type="disulfide bond" evidence="8">
    <location>
        <begin position="55"/>
        <end position="73"/>
    </location>
</feature>
<feature type="disulfide bond" evidence="8">
    <location>
        <begin position="64"/>
        <end position="71"/>
    </location>
</feature>
<feature type="disulfide bond" evidence="1">
    <location>
        <begin position="91"/>
        <end position="106"/>
    </location>
</feature>
<feature type="disulfide bond" evidence="1">
    <location>
        <begin position="102"/>
        <end position="110"/>
    </location>
</feature>
<feature type="sequence conflict" description="In Ref. 3; AA sequence." evidence="8" ref="3">
    <original>N</original>
    <variation>E</variation>
    <location>
        <position position="109"/>
    </location>
</feature>
<protein>
    <recommendedName>
        <fullName>Mu-ctenitoxin-Pn1a</fullName>
        <shortName>Mu-CNTX-Pn1a</shortName>
    </recommendedName>
    <alternativeName>
        <fullName>Toxin Tx1</fullName>
        <shortName>PNTx1</shortName>
        <shortName>PhTx1</shortName>
    </alternativeName>
</protein>
<name>TXL1_PHONI</name>
<dbReference type="EMBL" id="X73155">
    <property type="status" value="NOT_ANNOTATED_CDS"/>
    <property type="molecule type" value="mRNA"/>
</dbReference>
<dbReference type="PIR" id="A47130">
    <property type="entry name" value="A47130"/>
</dbReference>
<dbReference type="SMR" id="P17727"/>
<dbReference type="ArachnoServer" id="AS000356">
    <property type="toxin name" value="mu-ctenitoxin-Pn1a"/>
</dbReference>
<dbReference type="GO" id="GO:0005576">
    <property type="term" value="C:extracellular region"/>
    <property type="evidence" value="ECO:0007669"/>
    <property type="project" value="UniProtKB-SubCell"/>
</dbReference>
<dbReference type="GO" id="GO:0017080">
    <property type="term" value="F:sodium channel regulator activity"/>
    <property type="evidence" value="ECO:0007669"/>
    <property type="project" value="UniProtKB-KW"/>
</dbReference>
<dbReference type="GO" id="GO:0090729">
    <property type="term" value="F:toxin activity"/>
    <property type="evidence" value="ECO:0007669"/>
    <property type="project" value="UniProtKB-KW"/>
</dbReference>
<dbReference type="InterPro" id="IPR013605">
    <property type="entry name" value="Toxin_34"/>
</dbReference>
<dbReference type="Pfam" id="PF08396">
    <property type="entry name" value="Toxin_34"/>
    <property type="match status" value="1"/>
</dbReference>
<comment type="function">
    <text evidence="3 4 7">Reversible inhibitor of neuronal sodium channels (Nav1.2/ SCN2A) that binds in proximity to site 1 and displays increasing affinity as the membrane potential is depolarized. Induces excitatory symptoms and spastic paralysis in mice.</text>
</comment>
<comment type="subcellular location">
    <subcellularLocation>
        <location evidence="2">Secreted</location>
    </subcellularLocation>
</comment>
<comment type="tissue specificity">
    <text evidence="2">Expressed by the venom gland.</text>
</comment>
<comment type="domain">
    <text evidence="8">The presence of a 'disulfide through disulfide knot' structurally defines this protein as a knottin.</text>
</comment>
<comment type="PTM">
    <text>Contains 7 disulfide bonds.</text>
</comment>
<comment type="mass spectrometry" mass="8600.4" error="1.6" method="MALDI" evidence="3"/>
<comment type="mass spectrometry" mass="8598.92" error="0.11" method="Electrospray" evidence="4"/>
<comment type="mass spectrometry" mass="8594.6" method="Unknown" evidence="2"/>
<comment type="toxic dose">
    <text evidence="6">LD(50) is 0.05 mg/kg by intracerebroventricular injection into mice.</text>
</comment>
<comment type="similarity">
    <text evidence="8">Belongs to the neurotoxin 04 (omega-agtx) family. 02 (Tx1) subfamily.</text>
</comment>
<proteinExistence type="evidence at protein level"/>
<reference key="1">
    <citation type="journal article" date="1993" name="J. Biol. Chem.">
        <title>Sequence of the cDNA coding for the lethal neurotoxin Tx1 from the Brazilian 'armed' spider Phoneutria nigriventer predicts the synthesis and processing of a preprotoxin.</title>
        <authorList>
            <person name="Diniz M.R.V."/>
            <person name="Paine M.J.I."/>
            <person name="Diniz C.R."/>
            <person name="Theakston R.D.G."/>
            <person name="Crampton J.M."/>
        </authorList>
    </citation>
    <scope>NUCLEOTIDE SEQUENCE [MRNA]</scope>
    <source>
        <tissue>Venom gland</tissue>
    </source>
</reference>
<reference key="2">
    <citation type="journal article" date="2006" name="Comp. Biochem. Physiol.">
        <title>Comparison of the partial proteomes of the venoms of Brazilian spiders of the genus Phoneutria.</title>
        <authorList>
            <person name="Richardson M."/>
            <person name="Pimenta A.M."/>
            <person name="Bemquerer M.P."/>
            <person name="Santoro M.M."/>
            <person name="Beirao P.S."/>
            <person name="Lima M.E."/>
            <person name="Figueiredo S.G."/>
            <person name="Bloch C. Jr."/>
            <person name="Vasconcelos E.A."/>
            <person name="Campos F.A."/>
            <person name="Gomes P.C."/>
            <person name="Cordeiro M.N."/>
        </authorList>
    </citation>
    <scope>PROTEIN SEQUENCE OF 34-111</scope>
    <scope>SUBCELLULAR LOCATION</scope>
    <scope>TISSUE SPECIFICITY</scope>
    <scope>MASS SPECTROMETRY</scope>
    <source>
        <tissue>Venom</tissue>
    </source>
</reference>
<reference key="3">
    <citation type="journal article" date="1990" name="FEBS Lett.">
        <title>The purification and amino acid sequence of the lethal neurotoxin Tx1 from the venom of the Brazilian 'armed' spider Phoneutria nigriventer.</title>
        <authorList>
            <person name="Diniz C.R."/>
            <person name="Cordeiro M.N."/>
            <person name="Rezende L. Jr."/>
            <person name="Kelly P."/>
            <person name="Fischer S."/>
            <person name="Reimann F."/>
            <person name="Oliveira E.B."/>
            <person name="Richardson M."/>
        </authorList>
    </citation>
    <scope>PROTEIN SEQUENCE OF 34-110</scope>
    <scope>TOXIC DOSE</scope>
    <source>
        <tissue>Venom</tissue>
    </source>
</reference>
<reference key="4">
    <citation type="journal article" date="1991" name="Toxicon">
        <title>Isolation of neurotoxic peptides from the venom of the 'armed' spider Phoneutria nigriventer.</title>
        <authorList>
            <person name="Rezende L. Jr."/>
            <person name="Cordeiro M.N."/>
            <person name="Oliveira E.B."/>
            <person name="Diniz C.R."/>
        </authorList>
    </citation>
    <scope>PROTEIN SEQUENCE OF 34-43</scope>
    <source>
        <tissue>Venom</tissue>
    </source>
</reference>
<reference key="5">
    <citation type="journal article" date="2006" name="Mol. Pharmacol.">
        <title>Phoneutria nigriventer toxin 1: a novel, state-dependent inhibitor of neuronal sodium channels that interacts with mu-conotoxin binding sites.</title>
        <authorList>
            <person name="Martin-Moutot N."/>
            <person name="Mansuelle P."/>
            <person name="Alcaraz G."/>
            <person name="Dos Santos R.G."/>
            <person name="Cordeiro M.N."/>
            <person name="De Lima M.E."/>
            <person name="Seagar M."/>
            <person name="Van Renterghem C."/>
        </authorList>
    </citation>
    <scope>PROTEIN SEQUENCE OF 34-43</scope>
    <scope>MASS SPECTROMETRY</scope>
    <scope>AMIDATION AT GLY-111</scope>
    <scope>FUNCTION</scope>
    <source>
        <tissue>Venom</tissue>
    </source>
</reference>
<reference key="6">
    <citation type="journal article" date="1998" name="Toxicon">
        <title>Pathological changes induced by PhTx1 from Phoneutria nigriventer spider venom in mouse skeletal muscle in vitro.</title>
        <authorList>
            <person name="Mattiello-Sverzut A.C."/>
            <person name="Fontana M.D."/>
            <person name="Diniz C.R."/>
            <person name="da Cruz-Hofling M.A."/>
        </authorList>
    </citation>
    <scope>FUNCTION</scope>
    <source>
        <tissue>Venom</tissue>
    </source>
</reference>
<reference key="7">
    <citation type="journal article" date="1999" name="Braz. J. Med. Biol. Res.">
        <title>Binding sites and actions of Tx1, a neurotoxin from the venom of the spider Phoneutria nigriventer, in guinea pig ileum.</title>
        <authorList>
            <person name="Santos R.G."/>
            <person name="Diniz C.R."/>
            <person name="Cordeiro M.N."/>
            <person name="De Lima M.E."/>
        </authorList>
    </citation>
    <scope>ERRONEOUS FUNCTION</scope>
    <source>
        <tissue>Venom</tissue>
    </source>
</reference>
<reference key="8">
    <citation type="journal article" date="2006" name="Protein Expr. Purif.">
        <title>Functional expression and purification of recombinant Tx1, a sodium channel blocker neurotoxin from the venom of the Brazilian 'armed' spider, Phoneutria nigriventer.</title>
        <authorList>
            <person name="Diniz M.R.V."/>
            <person name="Theakston R.D.G."/>
            <person name="Crampton J.M."/>
            <person name="do Nascimento Cordeiro M."/>
            <person name="Pimenta A.M.C."/>
            <person name="De Lima M.E."/>
            <person name="Diniz C.R."/>
        </authorList>
    </citation>
    <scope>FUNCTION</scope>
    <scope>MASS SPECTROMETRY</scope>
    <scope>LACK OF AMIDATION AT GLY-111</scope>
    <source>
        <tissue>Venom</tissue>
    </source>
</reference>
<accession>P17727</accession>
<keyword id="KW-0027">Amidation</keyword>
<keyword id="KW-0903">Direct protein sequencing</keyword>
<keyword id="KW-1015">Disulfide bond</keyword>
<keyword id="KW-0872">Ion channel impairing toxin</keyword>
<keyword id="KW-0960">Knottin</keyword>
<keyword id="KW-0528">Neurotoxin</keyword>
<keyword id="KW-0964">Secreted</keyword>
<keyword id="KW-0732">Signal</keyword>
<keyword id="KW-0800">Toxin</keyword>
<keyword id="KW-0738">Voltage-gated sodium channel impairing toxin</keyword>
<organism>
    <name type="scientific">Phoneutria nigriventer</name>
    <name type="common">Brazilian armed spider</name>
    <name type="synonym">Ctenus nigriventer</name>
    <dbReference type="NCBI Taxonomy" id="6918"/>
    <lineage>
        <taxon>Eukaryota</taxon>
        <taxon>Metazoa</taxon>
        <taxon>Ecdysozoa</taxon>
        <taxon>Arthropoda</taxon>
        <taxon>Chelicerata</taxon>
        <taxon>Arachnida</taxon>
        <taxon>Araneae</taxon>
        <taxon>Araneomorphae</taxon>
        <taxon>Entelegynae</taxon>
        <taxon>Lycosoidea</taxon>
        <taxon>Ctenidae</taxon>
        <taxon>Phoneutria</taxon>
    </lineage>
</organism>